<feature type="chain" id="PRO_1000040495" description="6,7-dimethyl-8-ribityllumazine synthase">
    <location>
        <begin position="1"/>
        <end position="150"/>
    </location>
</feature>
<feature type="active site" description="Proton donor" evidence="1">
    <location>
        <position position="75"/>
    </location>
</feature>
<feature type="binding site" evidence="1">
    <location>
        <position position="11"/>
    </location>
    <ligand>
        <name>5-amino-6-(D-ribitylamino)uracil</name>
        <dbReference type="ChEBI" id="CHEBI:15934"/>
    </ligand>
</feature>
<feature type="binding site" evidence="1">
    <location>
        <begin position="43"/>
        <end position="45"/>
    </location>
    <ligand>
        <name>5-amino-6-(D-ribitylamino)uracil</name>
        <dbReference type="ChEBI" id="CHEBI:15934"/>
    </ligand>
</feature>
<feature type="binding site" evidence="1">
    <location>
        <begin position="67"/>
        <end position="69"/>
    </location>
    <ligand>
        <name>5-amino-6-(D-ribitylamino)uracil</name>
        <dbReference type="ChEBI" id="CHEBI:15934"/>
    </ligand>
</feature>
<feature type="binding site" evidence="1">
    <location>
        <begin position="72"/>
        <end position="73"/>
    </location>
    <ligand>
        <name>(2S)-2-hydroxy-3-oxobutyl phosphate</name>
        <dbReference type="ChEBI" id="CHEBI:58830"/>
    </ligand>
</feature>
<feature type="binding site" evidence="1">
    <location>
        <position position="100"/>
    </location>
    <ligand>
        <name>5-amino-6-(D-ribitylamino)uracil</name>
        <dbReference type="ChEBI" id="CHEBI:15934"/>
    </ligand>
</feature>
<feature type="binding site" evidence="1">
    <location>
        <position position="115"/>
    </location>
    <ligand>
        <name>(2S)-2-hydroxy-3-oxobutyl phosphate</name>
        <dbReference type="ChEBI" id="CHEBI:58830"/>
    </ligand>
</feature>
<accession>A3MX07</accession>
<gene>
    <name evidence="1" type="primary">ribH</name>
    <name type="ordered locus">Pcal_1757</name>
</gene>
<comment type="function">
    <text evidence="1">Catalyzes the formation of 6,7-dimethyl-8-ribityllumazine by condensation of 5-amino-6-(D-ribitylamino)uracil with 3,4-dihydroxy-2-butanone 4-phosphate. This is the penultimate step in the biosynthesis of riboflavin.</text>
</comment>
<comment type="catalytic activity">
    <reaction evidence="1">
        <text>(2S)-2-hydroxy-3-oxobutyl phosphate + 5-amino-6-(D-ribitylamino)uracil = 6,7-dimethyl-8-(1-D-ribityl)lumazine + phosphate + 2 H2O + H(+)</text>
        <dbReference type="Rhea" id="RHEA:26152"/>
        <dbReference type="ChEBI" id="CHEBI:15377"/>
        <dbReference type="ChEBI" id="CHEBI:15378"/>
        <dbReference type="ChEBI" id="CHEBI:15934"/>
        <dbReference type="ChEBI" id="CHEBI:43474"/>
        <dbReference type="ChEBI" id="CHEBI:58201"/>
        <dbReference type="ChEBI" id="CHEBI:58830"/>
        <dbReference type="EC" id="2.5.1.78"/>
    </reaction>
</comment>
<comment type="pathway">
    <text evidence="1">Cofactor biosynthesis; riboflavin biosynthesis; riboflavin from 2-hydroxy-3-oxobutyl phosphate and 5-amino-6-(D-ribitylamino)uracil: step 1/2.</text>
</comment>
<comment type="similarity">
    <text evidence="1">Belongs to the DMRL synthase family.</text>
</comment>
<keyword id="KW-0686">Riboflavin biosynthesis</keyword>
<keyword id="KW-0808">Transferase</keyword>
<dbReference type="EC" id="2.5.1.78" evidence="1"/>
<dbReference type="EMBL" id="CP000561">
    <property type="protein sequence ID" value="ABO09174.1"/>
    <property type="molecule type" value="Genomic_DNA"/>
</dbReference>
<dbReference type="RefSeq" id="WP_011850433.1">
    <property type="nucleotide sequence ID" value="NC_009073.1"/>
</dbReference>
<dbReference type="SMR" id="A3MX07"/>
<dbReference type="STRING" id="410359.Pcal_1757"/>
<dbReference type="GeneID" id="4909689"/>
<dbReference type="KEGG" id="pcl:Pcal_1757"/>
<dbReference type="eggNOG" id="arCOG01323">
    <property type="taxonomic scope" value="Archaea"/>
</dbReference>
<dbReference type="HOGENOM" id="CLU_089358_3_1_2"/>
<dbReference type="OrthoDB" id="7610at2157"/>
<dbReference type="UniPathway" id="UPA00275">
    <property type="reaction ID" value="UER00404"/>
</dbReference>
<dbReference type="Proteomes" id="UP000001431">
    <property type="component" value="Chromosome"/>
</dbReference>
<dbReference type="GO" id="GO:0009349">
    <property type="term" value="C:riboflavin synthase complex"/>
    <property type="evidence" value="ECO:0007669"/>
    <property type="project" value="InterPro"/>
</dbReference>
<dbReference type="GO" id="GO:0000906">
    <property type="term" value="F:6,7-dimethyl-8-ribityllumazine synthase activity"/>
    <property type="evidence" value="ECO:0007669"/>
    <property type="project" value="UniProtKB-UniRule"/>
</dbReference>
<dbReference type="GO" id="GO:0009231">
    <property type="term" value="P:riboflavin biosynthetic process"/>
    <property type="evidence" value="ECO:0007669"/>
    <property type="project" value="UniProtKB-UniRule"/>
</dbReference>
<dbReference type="CDD" id="cd09211">
    <property type="entry name" value="Lumazine_synthase_archaeal"/>
    <property type="match status" value="1"/>
</dbReference>
<dbReference type="FunFam" id="3.40.50.960:FF:000003">
    <property type="entry name" value="6,7-dimethyl-8-ribityllumazine synthase"/>
    <property type="match status" value="1"/>
</dbReference>
<dbReference type="Gene3D" id="3.40.50.960">
    <property type="entry name" value="Lumazine/riboflavin synthase"/>
    <property type="match status" value="1"/>
</dbReference>
<dbReference type="HAMAP" id="MF_00178">
    <property type="entry name" value="Lumazine_synth"/>
    <property type="match status" value="1"/>
</dbReference>
<dbReference type="InterPro" id="IPR034964">
    <property type="entry name" value="LS"/>
</dbReference>
<dbReference type="InterPro" id="IPR002180">
    <property type="entry name" value="LS/RS"/>
</dbReference>
<dbReference type="InterPro" id="IPR036467">
    <property type="entry name" value="LS/RS_sf"/>
</dbReference>
<dbReference type="NCBIfam" id="TIGR00114">
    <property type="entry name" value="lumazine-synth"/>
    <property type="match status" value="1"/>
</dbReference>
<dbReference type="PANTHER" id="PTHR21058:SF0">
    <property type="entry name" value="6,7-DIMETHYL-8-RIBITYLLUMAZINE SYNTHASE"/>
    <property type="match status" value="1"/>
</dbReference>
<dbReference type="PANTHER" id="PTHR21058">
    <property type="entry name" value="6,7-DIMETHYL-8-RIBITYLLUMAZINE SYNTHASE DMRL SYNTHASE LUMAZINE SYNTHASE"/>
    <property type="match status" value="1"/>
</dbReference>
<dbReference type="Pfam" id="PF00885">
    <property type="entry name" value="DMRL_synthase"/>
    <property type="match status" value="1"/>
</dbReference>
<dbReference type="SUPFAM" id="SSF52121">
    <property type="entry name" value="Lumazine synthase"/>
    <property type="match status" value="1"/>
</dbReference>
<organism>
    <name type="scientific">Pyrobaculum calidifontis (strain DSM 21063 / JCM 11548 / VA1)</name>
    <dbReference type="NCBI Taxonomy" id="410359"/>
    <lineage>
        <taxon>Archaea</taxon>
        <taxon>Thermoproteota</taxon>
        <taxon>Thermoprotei</taxon>
        <taxon>Thermoproteales</taxon>
        <taxon>Thermoproteaceae</taxon>
        <taxon>Pyrobaculum</taxon>
    </lineage>
</organism>
<proteinExistence type="inferred from homology"/>
<sequence length="150" mass="16357">MVKLALVVAEFNYDITHLMLQKALEHAKFLGAEVTYVVKVPGVFDIPMVLKELALKEDVDAVVTLGAVIQGATKHDEIVAQQAARKILDLAVESGKPITLGIIGHGANRMQALERVEEYARRAVEAAVKLARRKKLLKEAKYGGSTVVID</sequence>
<protein>
    <recommendedName>
        <fullName evidence="1">6,7-dimethyl-8-ribityllumazine synthase</fullName>
        <shortName evidence="1">DMRL synthase</shortName>
        <shortName evidence="1">LS</shortName>
        <shortName evidence="1">Lumazine synthase</shortName>
        <ecNumber evidence="1">2.5.1.78</ecNumber>
    </recommendedName>
</protein>
<reference key="1">
    <citation type="submission" date="2007-02" db="EMBL/GenBank/DDBJ databases">
        <title>Complete sequence of Pyrobaculum calidifontis JCM 11548.</title>
        <authorList>
            <consortium name="US DOE Joint Genome Institute"/>
            <person name="Copeland A."/>
            <person name="Lucas S."/>
            <person name="Lapidus A."/>
            <person name="Barry K."/>
            <person name="Glavina del Rio T."/>
            <person name="Dalin E."/>
            <person name="Tice H."/>
            <person name="Pitluck S."/>
            <person name="Chain P."/>
            <person name="Malfatti S."/>
            <person name="Shin M."/>
            <person name="Vergez L."/>
            <person name="Schmutz J."/>
            <person name="Larimer F."/>
            <person name="Land M."/>
            <person name="Hauser L."/>
            <person name="Kyrpides N."/>
            <person name="Mikhailova N."/>
            <person name="Cozen A.E."/>
            <person name="Fitz-Gibbon S.T."/>
            <person name="House C.H."/>
            <person name="Saltikov C."/>
            <person name="Lowe T.M."/>
            <person name="Richardson P."/>
        </authorList>
    </citation>
    <scope>NUCLEOTIDE SEQUENCE [LARGE SCALE GENOMIC DNA]</scope>
    <source>
        <strain>DSM 21063 / JCM 11548 / VA1</strain>
    </source>
</reference>
<name>RISB_PYRCJ</name>
<evidence type="ECO:0000255" key="1">
    <source>
        <dbReference type="HAMAP-Rule" id="MF_00178"/>
    </source>
</evidence>